<comment type="function">
    <text evidence="1">Depressant insect toxins cause a transient contraction paralysis followed by a slow flaccid paralysis. They bind voltage-independently to sodium channels (Nav) and block action potentials, primarily by depolarizing the axonal membrane and suppressing the sodium current.</text>
</comment>
<comment type="subcellular location">
    <subcellularLocation>
        <location evidence="1">Secreted</location>
    </subcellularLocation>
</comment>
<comment type="tissue specificity">
    <text evidence="3">Expressed by the venom gland.</text>
</comment>
<comment type="domain">
    <text evidence="3">Has the structural arrangement of an alpha-helix connected to antiparallel beta-sheets by disulfide bonds (CS-alpha/beta).</text>
</comment>
<comment type="similarity">
    <text evidence="3">Belongs to the long (4 C-C) scorpion toxin superfamily. Sodium channel inhibitor family. Beta subfamily.</text>
</comment>
<protein>
    <recommendedName>
        <fullName>Putative insect toxin Acra6</fullName>
    </recommendedName>
</protein>
<proteinExistence type="inferred from homology"/>
<feature type="chain" id="PRO_5001112291" description="Putative insect toxin Acra6">
    <location>
        <begin position="1"/>
        <end position="60"/>
    </location>
</feature>
<feature type="domain" description="LCN-type CS-alpha/beta" evidence="2">
    <location>
        <begin position="2"/>
        <end position="60"/>
    </location>
</feature>
<feature type="disulfide bond" evidence="2">
    <location>
        <begin position="16"/>
        <end position="37"/>
    </location>
</feature>
<feature type="disulfide bond" evidence="2">
    <location>
        <begin position="23"/>
        <end position="44"/>
    </location>
</feature>
<feature type="disulfide bond" evidence="2">
    <location>
        <begin position="27"/>
        <end position="46"/>
    </location>
</feature>
<dbReference type="EMBL" id="JQ975128">
    <property type="protein sequence ID" value="AGE83105.1"/>
    <property type="molecule type" value="mRNA"/>
</dbReference>
<dbReference type="SMR" id="M1INJ1"/>
<dbReference type="GO" id="GO:0005576">
    <property type="term" value="C:extracellular region"/>
    <property type="evidence" value="ECO:0007669"/>
    <property type="project" value="UniProtKB-SubCell"/>
</dbReference>
<dbReference type="GO" id="GO:0019871">
    <property type="term" value="F:sodium channel inhibitor activity"/>
    <property type="evidence" value="ECO:0007669"/>
    <property type="project" value="InterPro"/>
</dbReference>
<dbReference type="GO" id="GO:0090729">
    <property type="term" value="F:toxin activity"/>
    <property type="evidence" value="ECO:0007669"/>
    <property type="project" value="UniProtKB-KW"/>
</dbReference>
<dbReference type="GO" id="GO:0006952">
    <property type="term" value="P:defense response"/>
    <property type="evidence" value="ECO:0007669"/>
    <property type="project" value="InterPro"/>
</dbReference>
<dbReference type="CDD" id="cd23106">
    <property type="entry name" value="neurotoxins_LC_scorpion"/>
    <property type="match status" value="1"/>
</dbReference>
<dbReference type="Gene3D" id="3.30.30.10">
    <property type="entry name" value="Knottin, scorpion toxin-like"/>
    <property type="match status" value="1"/>
</dbReference>
<dbReference type="InterPro" id="IPR044062">
    <property type="entry name" value="LCN-type_CS_alpha_beta_dom"/>
</dbReference>
<dbReference type="InterPro" id="IPR003614">
    <property type="entry name" value="Scorpion_toxin-like"/>
</dbReference>
<dbReference type="InterPro" id="IPR036574">
    <property type="entry name" value="Scorpion_toxin-like_sf"/>
</dbReference>
<dbReference type="InterPro" id="IPR018218">
    <property type="entry name" value="Scorpion_toxinL"/>
</dbReference>
<dbReference type="InterPro" id="IPR002061">
    <property type="entry name" value="Scorpion_toxinL/defensin"/>
</dbReference>
<dbReference type="Pfam" id="PF00537">
    <property type="entry name" value="Toxin_3"/>
    <property type="match status" value="1"/>
</dbReference>
<dbReference type="PRINTS" id="PR00285">
    <property type="entry name" value="SCORPNTOXIN"/>
</dbReference>
<dbReference type="SMART" id="SM00505">
    <property type="entry name" value="Knot1"/>
    <property type="match status" value="1"/>
</dbReference>
<dbReference type="SUPFAM" id="SSF57095">
    <property type="entry name" value="Scorpion toxin-like"/>
    <property type="match status" value="1"/>
</dbReference>
<dbReference type="PROSITE" id="PS51863">
    <property type="entry name" value="LCN_CSAB"/>
    <property type="match status" value="1"/>
</dbReference>
<evidence type="ECO:0000250" key="1"/>
<evidence type="ECO:0000255" key="2">
    <source>
        <dbReference type="PROSITE-ProRule" id="PRU01210"/>
    </source>
</evidence>
<evidence type="ECO:0000305" key="3"/>
<name>SCX6_ANDCR</name>
<organism>
    <name type="scientific">Androctonus crassicauda</name>
    <name type="common">Arabian fat-tailed scorpion</name>
    <dbReference type="NCBI Taxonomy" id="122909"/>
    <lineage>
        <taxon>Eukaryota</taxon>
        <taxon>Metazoa</taxon>
        <taxon>Ecdysozoa</taxon>
        <taxon>Arthropoda</taxon>
        <taxon>Chelicerata</taxon>
        <taxon>Arachnida</taxon>
        <taxon>Scorpiones</taxon>
        <taxon>Buthida</taxon>
        <taxon>Buthoidea</taxon>
        <taxon>Buthidae</taxon>
        <taxon>Androctonus</taxon>
    </lineage>
</organism>
<sequence>VRDGYIRRKDEFKFKCYVDGKDCDDVCKSEGGSAGYCTALGFLCYCAGLPDDKAWKPTSS</sequence>
<reference key="1">
    <citation type="journal article" date="2013" name="Biochimie">
        <title>Molecular cloning and biochemical characterization of the first Na(+)-channel alpha-type toxin peptide (Acra4) from Androctonus crassicauda scorpion venom.</title>
        <authorList>
            <person name="Caliskan F."/>
            <person name="Quintero-Hernandez V."/>
            <person name="Restano-Cassulini R."/>
            <person name="Coronas-Valderrama F.I."/>
            <person name="Corzo G."/>
            <person name="Possani L.D."/>
        </authorList>
    </citation>
    <scope>NUCLEOTIDE SEQUENCE [MRNA]</scope>
    <source>
        <tissue>Venom gland</tissue>
    </source>
</reference>
<accession>M1INJ1</accession>
<keyword id="KW-1015">Disulfide bond</keyword>
<keyword id="KW-0872">Ion channel impairing toxin</keyword>
<keyword id="KW-0528">Neurotoxin</keyword>
<keyword id="KW-0964">Secreted</keyword>
<keyword id="KW-0800">Toxin</keyword>
<keyword id="KW-0738">Voltage-gated sodium channel impairing toxin</keyword>